<accession>O54311</accession>
<dbReference type="EMBL" id="Y11219">
    <property type="protein sequence ID" value="CAA72106.1"/>
    <property type="status" value="ALT_INIT"/>
    <property type="molecule type" value="mRNA"/>
</dbReference>
<dbReference type="EMBL" id="AE000512">
    <property type="protein sequence ID" value="AAD36751.1"/>
    <property type="molecule type" value="Genomic_DNA"/>
</dbReference>
<dbReference type="PIR" id="F72222">
    <property type="entry name" value="F72222"/>
</dbReference>
<dbReference type="RefSeq" id="NP_229484.1">
    <property type="nucleotide sequence ID" value="NC_000853.1"/>
</dbReference>
<dbReference type="RefSeq" id="WP_004082200.1">
    <property type="nucleotide sequence ID" value="NZ_CP011107.1"/>
</dbReference>
<dbReference type="FunCoup" id="O54311">
    <property type="interactions" value="252"/>
</dbReference>
<dbReference type="STRING" id="243274.TM_1684"/>
<dbReference type="PaxDb" id="243274-THEMA_05820"/>
<dbReference type="EnsemblBacteria" id="AAD36751">
    <property type="protein sequence ID" value="AAD36751"/>
    <property type="gene ID" value="TM_1684"/>
</dbReference>
<dbReference type="KEGG" id="tma:TM1684"/>
<dbReference type="KEGG" id="tmi:THEMA_05820"/>
<dbReference type="KEGG" id="tmm:Tmari_1692"/>
<dbReference type="KEGG" id="tmw:THMA_1726"/>
<dbReference type="eggNOG" id="COG0254">
    <property type="taxonomic scope" value="Bacteria"/>
</dbReference>
<dbReference type="InParanoid" id="O54311"/>
<dbReference type="OrthoDB" id="9803251at2"/>
<dbReference type="Proteomes" id="UP000008183">
    <property type="component" value="Chromosome"/>
</dbReference>
<dbReference type="GO" id="GO:1990904">
    <property type="term" value="C:ribonucleoprotein complex"/>
    <property type="evidence" value="ECO:0007669"/>
    <property type="project" value="UniProtKB-KW"/>
</dbReference>
<dbReference type="GO" id="GO:0005840">
    <property type="term" value="C:ribosome"/>
    <property type="evidence" value="ECO:0007669"/>
    <property type="project" value="UniProtKB-KW"/>
</dbReference>
<dbReference type="GO" id="GO:0046872">
    <property type="term" value="F:metal ion binding"/>
    <property type="evidence" value="ECO:0007669"/>
    <property type="project" value="UniProtKB-KW"/>
</dbReference>
<dbReference type="GO" id="GO:0019843">
    <property type="term" value="F:rRNA binding"/>
    <property type="evidence" value="ECO:0007669"/>
    <property type="project" value="UniProtKB-KW"/>
</dbReference>
<dbReference type="GO" id="GO:0003735">
    <property type="term" value="F:structural constituent of ribosome"/>
    <property type="evidence" value="ECO:0007669"/>
    <property type="project" value="InterPro"/>
</dbReference>
<dbReference type="GO" id="GO:0006412">
    <property type="term" value="P:translation"/>
    <property type="evidence" value="ECO:0007669"/>
    <property type="project" value="UniProtKB-UniRule"/>
</dbReference>
<dbReference type="Gene3D" id="4.10.830.30">
    <property type="entry name" value="Ribosomal protein L31"/>
    <property type="match status" value="1"/>
</dbReference>
<dbReference type="HAMAP" id="MF_00501">
    <property type="entry name" value="Ribosomal_bL31_1"/>
    <property type="match status" value="1"/>
</dbReference>
<dbReference type="InterPro" id="IPR034704">
    <property type="entry name" value="Ribosomal_bL28/bL31-like_sf"/>
</dbReference>
<dbReference type="InterPro" id="IPR002150">
    <property type="entry name" value="Ribosomal_bL31"/>
</dbReference>
<dbReference type="InterPro" id="IPR027491">
    <property type="entry name" value="Ribosomal_bL31_A"/>
</dbReference>
<dbReference type="InterPro" id="IPR042105">
    <property type="entry name" value="Ribosomal_bL31_sf"/>
</dbReference>
<dbReference type="NCBIfam" id="TIGR00105">
    <property type="entry name" value="L31"/>
    <property type="match status" value="1"/>
</dbReference>
<dbReference type="NCBIfam" id="NF000612">
    <property type="entry name" value="PRK00019.1"/>
    <property type="match status" value="1"/>
</dbReference>
<dbReference type="PANTHER" id="PTHR33280">
    <property type="entry name" value="50S RIBOSOMAL PROTEIN L31, CHLOROPLASTIC"/>
    <property type="match status" value="1"/>
</dbReference>
<dbReference type="PANTHER" id="PTHR33280:SF1">
    <property type="entry name" value="LARGE RIBOSOMAL SUBUNIT PROTEIN BL31C"/>
    <property type="match status" value="1"/>
</dbReference>
<dbReference type="Pfam" id="PF01197">
    <property type="entry name" value="Ribosomal_L31"/>
    <property type="match status" value="1"/>
</dbReference>
<dbReference type="PRINTS" id="PR01249">
    <property type="entry name" value="RIBOSOMALL31"/>
</dbReference>
<dbReference type="SUPFAM" id="SSF143800">
    <property type="entry name" value="L28p-like"/>
    <property type="match status" value="1"/>
</dbReference>
<dbReference type="PROSITE" id="PS01143">
    <property type="entry name" value="RIBOSOMAL_L31"/>
    <property type="match status" value="1"/>
</dbReference>
<organism>
    <name type="scientific">Thermotoga maritima (strain ATCC 43589 / DSM 3109 / JCM 10099 / NBRC 100826 / MSB8)</name>
    <dbReference type="NCBI Taxonomy" id="243274"/>
    <lineage>
        <taxon>Bacteria</taxon>
        <taxon>Thermotogati</taxon>
        <taxon>Thermotogota</taxon>
        <taxon>Thermotogae</taxon>
        <taxon>Thermotogales</taxon>
        <taxon>Thermotogaceae</taxon>
        <taxon>Thermotoga</taxon>
    </lineage>
</organism>
<feature type="chain" id="PRO_0000173169" description="Large ribosomal subunit protein bL31">
    <location>
        <begin position="1"/>
        <end position="71"/>
    </location>
</feature>
<feature type="binding site" evidence="1">
    <location>
        <position position="16"/>
    </location>
    <ligand>
        <name>Zn(2+)</name>
        <dbReference type="ChEBI" id="CHEBI:29105"/>
    </ligand>
</feature>
<feature type="binding site" evidence="1">
    <location>
        <position position="18"/>
    </location>
    <ligand>
        <name>Zn(2+)</name>
        <dbReference type="ChEBI" id="CHEBI:29105"/>
    </ligand>
</feature>
<feature type="binding site" evidence="1">
    <location>
        <position position="36"/>
    </location>
    <ligand>
        <name>Zn(2+)</name>
        <dbReference type="ChEBI" id="CHEBI:29105"/>
    </ligand>
</feature>
<feature type="binding site" evidence="1">
    <location>
        <position position="39"/>
    </location>
    <ligand>
        <name>Zn(2+)</name>
        <dbReference type="ChEBI" id="CHEBI:29105"/>
    </ligand>
</feature>
<protein>
    <recommendedName>
        <fullName evidence="1">Large ribosomal subunit protein bL31</fullName>
    </recommendedName>
    <alternativeName>
        <fullName evidence="2">50S ribosomal protein L31</fullName>
    </alternativeName>
</protein>
<name>RL31_THEMA</name>
<reference key="1">
    <citation type="journal article" date="1999" name="Protein Sci.">
        <title>Cloning, overexpression, purification, and physicochemical characterization of a cold shock protein homolog from the hyperthermophilic bacterium Thermotoga maritima.</title>
        <authorList>
            <person name="Welker C."/>
            <person name="Bohm G."/>
            <person name="Schurig H."/>
            <person name="Jaenicke R."/>
        </authorList>
    </citation>
    <scope>NUCLEOTIDE SEQUENCE [GENOMIC DNA]</scope>
    <source>
        <strain>ATCC 43589 / DSM 3109 / JCM 10099 / NBRC 100826 / MSB8</strain>
    </source>
</reference>
<reference key="2">
    <citation type="journal article" date="1999" name="Nature">
        <title>Evidence for lateral gene transfer between Archaea and Bacteria from genome sequence of Thermotoga maritima.</title>
        <authorList>
            <person name="Nelson K.E."/>
            <person name="Clayton R.A."/>
            <person name="Gill S.R."/>
            <person name="Gwinn M.L."/>
            <person name="Dodson R.J."/>
            <person name="Haft D.H."/>
            <person name="Hickey E.K."/>
            <person name="Peterson J.D."/>
            <person name="Nelson W.C."/>
            <person name="Ketchum K.A."/>
            <person name="McDonald L.A."/>
            <person name="Utterback T.R."/>
            <person name="Malek J.A."/>
            <person name="Linher K.D."/>
            <person name="Garrett M.M."/>
            <person name="Stewart A.M."/>
            <person name="Cotton M.D."/>
            <person name="Pratt M.S."/>
            <person name="Phillips C.A."/>
            <person name="Richardson D.L."/>
            <person name="Heidelberg J.F."/>
            <person name="Sutton G.G."/>
            <person name="Fleischmann R.D."/>
            <person name="Eisen J.A."/>
            <person name="White O."/>
            <person name="Salzberg S.L."/>
            <person name="Smith H.O."/>
            <person name="Venter J.C."/>
            <person name="Fraser C.M."/>
        </authorList>
    </citation>
    <scope>NUCLEOTIDE SEQUENCE [LARGE SCALE GENOMIC DNA]</scope>
    <source>
        <strain>ATCC 43589 / DSM 3109 / JCM 10099 / NBRC 100826 / MSB8</strain>
    </source>
</reference>
<sequence length="71" mass="7986">MKKGIHPEMKLVTVKCACGAEHTFYTTVDNIRIDVCSNCHPFYTSGGKGGVLIVDTEGRVEKFRRKYGDNY</sequence>
<proteinExistence type="inferred from homology"/>
<gene>
    <name evidence="1" type="primary">rpmE</name>
    <name type="ordered locus">TM_1684</name>
</gene>
<evidence type="ECO:0000255" key="1">
    <source>
        <dbReference type="HAMAP-Rule" id="MF_00501"/>
    </source>
</evidence>
<evidence type="ECO:0000305" key="2"/>
<comment type="function">
    <text evidence="1">Binds the 23S rRNA.</text>
</comment>
<comment type="cofactor">
    <cofactor evidence="1">
        <name>Zn(2+)</name>
        <dbReference type="ChEBI" id="CHEBI:29105"/>
    </cofactor>
    <text evidence="1">Binds 1 zinc ion per subunit.</text>
</comment>
<comment type="subunit">
    <text evidence="1">Part of the 50S ribosomal subunit.</text>
</comment>
<comment type="similarity">
    <text evidence="1">Belongs to the bacterial ribosomal protein bL31 family. Type A subfamily.</text>
</comment>
<comment type="sequence caution" evidence="2">
    <conflict type="erroneous initiation">
        <sequence resource="EMBL-CDS" id="CAA72106"/>
    </conflict>
</comment>
<keyword id="KW-0479">Metal-binding</keyword>
<keyword id="KW-1185">Reference proteome</keyword>
<keyword id="KW-0687">Ribonucleoprotein</keyword>
<keyword id="KW-0689">Ribosomal protein</keyword>
<keyword id="KW-0694">RNA-binding</keyword>
<keyword id="KW-0699">rRNA-binding</keyword>
<keyword id="KW-0862">Zinc</keyword>